<organismHost>
    <name type="scientific">Mus musculus musculus</name>
    <name type="common">eastern European house mouse</name>
    <dbReference type="NCBI Taxonomy" id="39442"/>
</organismHost>
<name>VP7_ROTME</name>
<organism>
    <name type="scientific">Rotavirus A (isolate RVA/Mouse/Brazil/EHP/1981/G16P[20])</name>
    <name type="common">RV-A</name>
    <dbReference type="NCBI Taxonomy" id="578840"/>
    <lineage>
        <taxon>Viruses</taxon>
        <taxon>Riboviria</taxon>
        <taxon>Orthornavirae</taxon>
        <taxon>Duplornaviricota</taxon>
        <taxon>Resentoviricetes</taxon>
        <taxon>Reovirales</taxon>
        <taxon>Sedoreoviridae</taxon>
        <taxon>Rotavirus</taxon>
        <taxon>Rotavirus A</taxon>
    </lineage>
</organism>
<proteinExistence type="inferred from homology"/>
<keyword id="KW-0024">Alternative initiation</keyword>
<keyword id="KW-0106">Calcium</keyword>
<keyword id="KW-0167">Capsid protein</keyword>
<keyword id="KW-1015">Disulfide bond</keyword>
<keyword id="KW-0325">Glycoprotein</keyword>
<keyword id="KW-1038">Host endoplasmic reticulum</keyword>
<keyword id="KW-0945">Host-virus interaction</keyword>
<keyword id="KW-0479">Metal-binding</keyword>
<keyword id="KW-1152">Outer capsid protein</keyword>
<keyword id="KW-0732">Signal</keyword>
<keyword id="KW-1146">T=13 icosahedral capsid protein</keyword>
<keyword id="KW-0946">Virion</keyword>
<reference key="1">
    <citation type="journal article" date="1994" name="Virology">
        <title>Comparison of VP4 and VP7 of five murine rotavirus strains.</title>
        <authorList>
            <person name="Dunn S.J."/>
            <person name="Burns J.W."/>
            <person name="Cross T.L."/>
            <person name="Vo P.T."/>
            <person name="Ward R.L."/>
            <person name="Bremont M."/>
            <person name="Greenberg H.B."/>
        </authorList>
    </citation>
    <scope>NUCLEOTIDE SEQUENCE [GENOMIC RNA]</scope>
</reference>
<sequence>MYGIEYTTALTFLISFLLLRYMLKSVVKMMDFIVYKFLLVILILSPYIKAQNYGINLPITGSMDTAYANSTQSETFLTSTLCLYYPTEAATEISDNSWKDTLSQLFLMKGWPTGSVYFKEYANIAAFSIDPQLYCDYNVVLMKYDASLQMDMSELADLILNEWLCNPMDITLYYYQQTDETNKWISMGSSCTIKVCPLNTQTLGIGCLTTNANTFEEIATAEKLAITDVVDGVNHKLDVTTATCTIRNCKKLGPRENVAIIQVGGSDVIDITADPTTTPQTERMMRVNWKKWWQVFYTVVDYVNQIISAMSKRSRSLNSAAFYYRV</sequence>
<feature type="signal peptide" evidence="2">
    <location>
        <begin position="1"/>
        <end position="50"/>
    </location>
</feature>
<feature type="chain" id="PRO_0000369104" description="Outer capsid glycoprotein VP7" evidence="2">
    <location>
        <begin position="51"/>
        <end position="326"/>
    </location>
</feature>
<feature type="region of interest" description="CNP motif; interaction with ITGAV/ITGB3" evidence="2">
    <location>
        <begin position="165"/>
        <end position="167"/>
    </location>
</feature>
<feature type="region of interest" description="LVD motif; interaction with ITGA4/ITGB1 heterodimer" evidence="2">
    <location>
        <begin position="237"/>
        <end position="239"/>
    </location>
</feature>
<feature type="region of interest" description="GPR motif; interaction with ITGAX/ITGB2" evidence="2">
    <location>
        <begin position="253"/>
        <end position="255"/>
    </location>
</feature>
<feature type="binding site" evidence="2">
    <location>
        <position position="95"/>
    </location>
    <ligand>
        <name>Ca(2+)</name>
        <dbReference type="ChEBI" id="CHEBI:29108"/>
        <label>1</label>
    </ligand>
</feature>
<feature type="binding site" evidence="2">
    <location>
        <position position="177"/>
    </location>
    <ligand>
        <name>Ca(2+)</name>
        <dbReference type="ChEBI" id="CHEBI:29108"/>
        <label>2</label>
    </ligand>
</feature>
<feature type="binding site" evidence="2">
    <location>
        <position position="206"/>
    </location>
    <ligand>
        <name>Ca(2+)</name>
        <dbReference type="ChEBI" id="CHEBI:29108"/>
        <label>1</label>
    </ligand>
</feature>
<feature type="binding site" evidence="2">
    <location>
        <position position="214"/>
    </location>
    <ligand>
        <name>Ca(2+)</name>
        <dbReference type="ChEBI" id="CHEBI:29108"/>
        <label>1</label>
    </ligand>
</feature>
<feature type="binding site" evidence="2">
    <location>
        <position position="216"/>
    </location>
    <ligand>
        <name>Ca(2+)</name>
        <dbReference type="ChEBI" id="CHEBI:29108"/>
        <label>1</label>
    </ligand>
</feature>
<feature type="binding site" evidence="2">
    <location>
        <position position="228"/>
    </location>
    <ligand>
        <name>Ca(2+)</name>
        <dbReference type="ChEBI" id="CHEBI:29108"/>
        <label>2</label>
    </ligand>
</feature>
<feature type="binding site" evidence="2">
    <location>
        <position position="229"/>
    </location>
    <ligand>
        <name>Ca(2+)</name>
        <dbReference type="ChEBI" id="CHEBI:29108"/>
        <label>2</label>
    </ligand>
</feature>
<feature type="binding site" evidence="2">
    <location>
        <position position="231"/>
    </location>
    <ligand>
        <name>Ca(2+)</name>
        <dbReference type="ChEBI" id="CHEBI:29108"/>
        <label>2</label>
    </ligand>
</feature>
<feature type="binding site" evidence="2">
    <location>
        <position position="301"/>
    </location>
    <ligand>
        <name>Ca(2+)</name>
        <dbReference type="ChEBI" id="CHEBI:29108"/>
        <label>2</label>
    </ligand>
</feature>
<feature type="glycosylation site" description="N-linked (GlcNAc...) asparagine; by host" evidence="1">
    <location>
        <position position="69"/>
    </location>
</feature>
<feature type="disulfide bond" evidence="2">
    <location>
        <begin position="82"/>
        <end position="135"/>
    </location>
</feature>
<feature type="disulfide bond" evidence="2">
    <location>
        <begin position="165"/>
        <end position="249"/>
    </location>
</feature>
<feature type="disulfide bond" evidence="2">
    <location>
        <begin position="191"/>
        <end position="244"/>
    </location>
</feature>
<feature type="disulfide bond" evidence="2">
    <location>
        <begin position="196"/>
        <end position="207"/>
    </location>
</feature>
<feature type="splice variant" id="VSP_038602" description="In isoform 2." evidence="3">
    <location>
        <begin position="1"/>
        <end position="29"/>
    </location>
</feature>
<dbReference type="EMBL" id="U08425">
    <property type="protein sequence ID" value="AAA50488.1"/>
    <property type="molecule type" value="Genomic_RNA"/>
</dbReference>
<dbReference type="SMR" id="Q83446"/>
<dbReference type="GO" id="GO:0044166">
    <property type="term" value="C:host cell endoplasmic reticulum lumen"/>
    <property type="evidence" value="ECO:0007669"/>
    <property type="project" value="UniProtKB-SubCell"/>
</dbReference>
<dbReference type="GO" id="GO:0039621">
    <property type="term" value="C:T=13 icosahedral viral capsid"/>
    <property type="evidence" value="ECO:0007669"/>
    <property type="project" value="UniProtKB-UniRule"/>
</dbReference>
<dbReference type="GO" id="GO:0039624">
    <property type="term" value="C:viral outer capsid"/>
    <property type="evidence" value="ECO:0007669"/>
    <property type="project" value="UniProtKB-UniRule"/>
</dbReference>
<dbReference type="GO" id="GO:0046872">
    <property type="term" value="F:metal ion binding"/>
    <property type="evidence" value="ECO:0007669"/>
    <property type="project" value="UniProtKB-KW"/>
</dbReference>
<dbReference type="Gene3D" id="3.40.50.11130">
    <property type="entry name" value="Glycoprotein VP7, domain 1"/>
    <property type="match status" value="1"/>
</dbReference>
<dbReference type="Gene3D" id="2.60.120.800">
    <property type="entry name" value="Rotavirus outer-layer protein VP7, domain 2"/>
    <property type="match status" value="1"/>
</dbReference>
<dbReference type="HAMAP" id="MF_04130">
    <property type="entry name" value="Rota_VP7"/>
    <property type="match status" value="1"/>
</dbReference>
<dbReference type="HAMAP" id="MF_04131">
    <property type="entry name" value="Rota_VP7_A"/>
    <property type="match status" value="1"/>
</dbReference>
<dbReference type="InterPro" id="IPR001963">
    <property type="entry name" value="VP7"/>
</dbReference>
<dbReference type="InterPro" id="IPR042207">
    <property type="entry name" value="VP7_1"/>
</dbReference>
<dbReference type="InterPro" id="IPR042210">
    <property type="entry name" value="VP7_2"/>
</dbReference>
<dbReference type="Pfam" id="PF00434">
    <property type="entry name" value="VP7"/>
    <property type="match status" value="1"/>
</dbReference>
<evidence type="ECO:0000255" key="1"/>
<evidence type="ECO:0000255" key="2">
    <source>
        <dbReference type="HAMAP-Rule" id="MF_04131"/>
    </source>
</evidence>
<evidence type="ECO:0000305" key="3"/>
<accession>Q83446</accession>
<comment type="function">
    <text evidence="2">Calcium-binding protein that interacts with rotavirus cell receptors once the initial attachment by VP4 has been achieved. Rotavirus attachment and entry into the host cell probably involves multiple sequential contacts between the outer capsid proteins VP4 and VP7, and the cell receptors. Following entry into the host cell, low intracellular or intravesicular Ca(2+) concentration probably causes the calcium-stabilized VP7 trimers to dissociate from the virion. This step is probably necessary for the membrane-disrupting entry step and the release of VP4, which is locked onto the virion by VP7.</text>
</comment>
<comment type="subunit">
    <text evidence="2">Homotrimer; disulfide-linked. 2 Ca(2+) ions bound at each subunit interface in the trimer hold the trimer together. Interacts with the intermediate capsid protein VP6. Interacts with the outer capsid protein VP5*.</text>
</comment>
<comment type="subcellular location">
    <subcellularLocation>
        <location evidence="2">Virion</location>
    </subcellularLocation>
    <subcellularLocation>
        <location evidence="2">Host endoplasmic reticulum lumen</location>
    </subcellularLocation>
    <text evidence="2">The outer layer contains 780 copies of VP7, grouped as 260 trimers. Immature double-layered particles assembled in the cytoplasm bud across the membrane of the endoplasmic reticulum, acquiring during this process a transient lipid membrane that is modified with the ER resident viral glycoproteins NSP4 and VP7; these enveloped particles also contain VP4. As the particles move towards the interior of the ER cisternae, the transient lipid membrane and the non-structural protein NSP4 are lost, while the virus surface proteins VP4 and VP7 rearrange to form the outermost virus protein layer, yielding mature infectious triple-layered particles.</text>
</comment>
<comment type="alternative products">
    <event type="alternative initiation"/>
    <isoform>
        <id>Q83446-1</id>
        <name>1</name>
        <sequence type="displayed"/>
    </isoform>
    <isoform>
        <id>Q83446-2</id>
        <name>2</name>
        <sequence type="described" ref="VSP_038602"/>
    </isoform>
</comment>
<comment type="PTM">
    <text evidence="2">N-glycosylated.</text>
</comment>
<comment type="PTM">
    <text evidence="2">The N-terminus is blocked possibly by pyroglutamic acid.</text>
</comment>
<comment type="miscellaneous">
    <text evidence="2">Some rotavirus strains are neuraminidase-sensitive and require sialic acid to attach to the cell surface. Some rotavirus strains are integrin-dependent. Some rotavirus strains depend on ganglioside for their entry into the host cell. Hsp70 also seems to be involved in the entry of some strains.</text>
</comment>
<comment type="miscellaneous">
    <text evidence="2">In group A rotaviruses, VP7 defines the G serotype.</text>
</comment>
<comment type="miscellaneous">
    <molecule>Isoform 2</molecule>
    <text evidence="3">Produced by alternative initiation at Met-30 of isoform 1.</text>
</comment>
<comment type="similarity">
    <text evidence="2">Belongs to the rotavirus VP7 family.</text>
</comment>
<protein>
    <recommendedName>
        <fullName evidence="2">Outer capsid glycoprotein VP7</fullName>
    </recommendedName>
</protein>